<sequence>MDLYHTPAGALDKLVAHSLHPAPEFTAAVRRALGSLDNVLRKNGAGGLQRPRVIRIIKGGAHARGTALRGGTDVELVIFLDCLRSFGDQKTCHTEILGAIQALLESWGCNPGPGLTFEFSGPKASGILQFRLASVDQENWIDVSLVPAFDALGQLHSEVKPTPNVYSSLLSSHCQAGEHSACFTELRKNFVNIRPVKLKNLILLVKHWYRQVQTQVVRATLPPSYALELLTIFAWEQGCRKDAFSLAQGLRTVLALIQRNKHLCIFWTENYGFEDPAVGEFLRRQLKRPRPVILDPADPTWDLGNGTAWCWDVLAKEAEYSFNQQCFKEASGALVQPWEGPGLPCAGILDLGHPIQQGAKHALEDNNGHLAVQPMKESLQPSNPARGLPETATKISAMPDPTVTETHKSLKKSVHPKTVSETVVNPSSHVWITQSTASSNTPPGHSSMSTAGSQMGPDLSQIPSKELDSFIQDHLRPSSQFQQQVRQAIDTILCCLREKCVDKVLRVSKGGSFGRGTDLRGKCDVELVIFYKTLGDFKGQNSHQTEILCDMQAQLQRWCQNPAPGLSLQFIEQKSNALHLQLVPTNLSNRVDLSVLPAFDAVGPLKSGAKPLPETYSSLLSSGCQAGEHAACFAELRRNFINTRPAKLRSLMLLVKHWYRQVAARFEGGETAGAALPPAYALELLTVFAWEQGCGEQKFSMAEGLRTVLRLVQQHQSLCIYWTVNYSVQDPAIRAHLLRQLRKARPLILDPADPTWNMDQGNWKLLAQEAAALESQVCLQSRDGNLVPPWDVMPALLHQTPAQNLDKFICEFLQPDRHFLTQVKRAVDTICSFLKENCFRNSTIKVLKVVKGGSSAKGTALQGRSDADLVVFLSCFRQFSEQGSHRAEIIAEIQAQLEACQQKQRFDVKFEISKRKNPRVLSFTLTSKTLLGQSVDFDVLPAFDALGQLKSGSRPDPRVYTDLIQSYSNAGEFSTCFTELQRDFISSRPTKLKSLIRLVKHWYQQCNKTVKGKGSLPPQHGLELLTVYAWERGSQNPQFNMAEGFRTVLELIGQYRQLCVYWTINYGAEDETIGDFLKMQLQKPRPVILDPADPTGNLGHNARWDLLAKEAAAYTSALCCMDKDGNPIKPWPVKAAV</sequence>
<protein>
    <recommendedName>
        <fullName>2'-5'-oligoadenylate synthase 3</fullName>
        <shortName>(2-5')oligo(A) synthase 3</shortName>
        <shortName>2-5A synthase 3</shortName>
        <ecNumber>2.7.7.84</ecNumber>
    </recommendedName>
</protein>
<feature type="chain" id="PRO_0000418631" description="2'-5'-oligoadenylate synthase 3">
    <location>
        <begin position="1"/>
        <end position="1137"/>
    </location>
</feature>
<feature type="region of interest" description="OAS domain 1" evidence="6">
    <location>
        <begin position="6"/>
        <end position="341"/>
    </location>
</feature>
<feature type="region of interest" description="Interaction with dsRNA" evidence="4">
    <location>
        <begin position="12"/>
        <end position="56"/>
    </location>
</feature>
<feature type="region of interest" description="Interaction with dsRNA" evidence="4">
    <location>
        <begin position="185"/>
        <end position="199"/>
    </location>
</feature>
<feature type="region of interest" description="Linker" evidence="6">
    <location>
        <begin position="342"/>
        <end position="461"/>
    </location>
</feature>
<feature type="region of interest" description="Disordered" evidence="5">
    <location>
        <begin position="434"/>
        <end position="462"/>
    </location>
</feature>
<feature type="region of interest" description="OAS domain 2" evidence="6">
    <location>
        <begin position="462"/>
        <end position="792"/>
    </location>
</feature>
<feature type="region of interest" description="OAS domain 3" evidence="6">
    <location>
        <begin position="800"/>
        <end position="1134"/>
    </location>
</feature>
<feature type="compositionally biased region" description="Polar residues" evidence="5">
    <location>
        <begin position="434"/>
        <end position="453"/>
    </location>
</feature>
<feature type="binding site" evidence="2">
    <location>
        <position position="854"/>
    </location>
    <ligand>
        <name>ATP</name>
        <dbReference type="ChEBI" id="CHEBI:30616"/>
    </ligand>
</feature>
<feature type="binding site" evidence="2">
    <location>
        <position position="866"/>
    </location>
    <ligand>
        <name>Mg(2+)</name>
        <dbReference type="ChEBI" id="CHEBI:18420"/>
        <note>catalytic</note>
    </ligand>
</feature>
<feature type="binding site" evidence="2">
    <location>
        <position position="868"/>
    </location>
    <ligand>
        <name>Mg(2+)</name>
        <dbReference type="ChEBI" id="CHEBI:18420"/>
        <note>catalytic</note>
    </ligand>
</feature>
<feature type="binding site" evidence="2">
    <location>
        <position position="938"/>
    </location>
    <ligand>
        <name>Mg(2+)</name>
        <dbReference type="ChEBI" id="CHEBI:18420"/>
        <note>catalytic</note>
    </ligand>
</feature>
<feature type="binding site" evidence="3">
    <location>
        <position position="997"/>
    </location>
    <ligand>
        <name>ATP</name>
        <dbReference type="ChEBI" id="CHEBI:30616"/>
    </ligand>
</feature>
<feature type="binding site" evidence="2">
    <location>
        <position position="1000"/>
    </location>
    <ligand>
        <name>ATP</name>
        <dbReference type="ChEBI" id="CHEBI:30616"/>
    </ligand>
</feature>
<feature type="binding site" evidence="2">
    <location>
        <position position="1019"/>
    </location>
    <ligand>
        <name>ATP</name>
        <dbReference type="ChEBI" id="CHEBI:30616"/>
    </ligand>
</feature>
<feature type="site" description="Interaction with dsRNA" evidence="4">
    <location>
        <position position="154"/>
    </location>
</feature>
<feature type="site" description="Interaction with dsRNA" evidence="4">
    <location>
        <position position="242"/>
    </location>
</feature>
<feature type="modified residue" description="N-acetylmethionine" evidence="4">
    <location>
        <position position="1"/>
    </location>
</feature>
<proteinExistence type="evidence at transcript level"/>
<reference key="1">
    <citation type="journal article" date="2006" name="J. Mol. Evol.">
        <title>The mammalian 2'-5' oligoadenylate synthetase gene family: evidence for concerted evolution of paralogous Oas1 genes in Rodentia and Artiodactyla.</title>
        <authorList>
            <person name="Perelygin A.A."/>
            <person name="Zharkikh A.A."/>
            <person name="Scherbik S.V."/>
            <person name="Brinton M.A."/>
        </authorList>
    </citation>
    <scope>NUCLEOTIDE SEQUENCE [MRNA]</scope>
    <source>
        <strain>Sprague-Dawley</strain>
        <tissue>Large intestine</tissue>
    </source>
</reference>
<comment type="function">
    <text evidence="1">Interferon-induced, dsRNA-activated antiviral enzyme which plays a critical role in cellular innate antiviral response. In addition, it may also play a role in other cellular processes such as apoptosis, cell growth, differentiation and gene regulation. Synthesizes preferentially dimers of 2'-5'-oligoadenylates (2-5A) from ATP which then bind to the inactive monomeric form of ribonuclease L (RNase L) leading to its dimerization and subsequent activation. Activation of RNase L leads to degradation of cellular as well as viral RNA, resulting in the inhibition of protein synthesis, thus terminating viral replication. Can mediate the antiviral effect via the classical RNase L-dependent pathway or an alternative antiviral pathway independent of RNase L (By similarity).</text>
</comment>
<comment type="catalytic activity">
    <reaction>
        <text>3 ATP = 5'-triphosphoadenylyl-(2'-&gt;5')-adenylyl-(2'-&gt;5')-adenosine + 2 diphosphate</text>
        <dbReference type="Rhea" id="RHEA:34407"/>
        <dbReference type="ChEBI" id="CHEBI:30616"/>
        <dbReference type="ChEBI" id="CHEBI:33019"/>
        <dbReference type="ChEBI" id="CHEBI:67143"/>
        <dbReference type="EC" id="2.7.7.84"/>
    </reaction>
</comment>
<comment type="cofactor">
    <cofactor evidence="6">
        <name>Mg(2+)</name>
        <dbReference type="ChEBI" id="CHEBI:18420"/>
    </cofactor>
</comment>
<comment type="activity regulation">
    <text evidence="4">Produced as a latent enzyme which is activated by dsRNA generated during the course of viral infection. Strongly activated by long dsRNAs at least 50 nucleotides in length. ssRNA does not activate the enzyme.</text>
</comment>
<comment type="subunit">
    <text evidence="4">Monomer.</text>
</comment>
<comment type="subcellular location">
    <subcellularLocation>
        <location evidence="1">Cytoplasm</location>
    </subcellularLocation>
    <subcellularLocation>
        <location evidence="1">Nucleus</location>
    </subcellularLocation>
</comment>
<comment type="domain">
    <text evidence="4">OAS domain 3 is catalytically active. OAS domain 1 has no catalytic activity but is essential for recognition of long dsRNAs.</text>
</comment>
<comment type="similarity">
    <text evidence="6">Belongs to the 2-5A synthase family.</text>
</comment>
<gene>
    <name type="primary">Oas3</name>
</gene>
<accession>Q5MYT7</accession>
<keyword id="KW-0007">Acetylation</keyword>
<keyword id="KW-0051">Antiviral defense</keyword>
<keyword id="KW-0067">ATP-binding</keyword>
<keyword id="KW-0963">Cytoplasm</keyword>
<keyword id="KW-0391">Immunity</keyword>
<keyword id="KW-0399">Innate immunity</keyword>
<keyword id="KW-0460">Magnesium</keyword>
<keyword id="KW-0479">Metal-binding</keyword>
<keyword id="KW-0547">Nucleotide-binding</keyword>
<keyword id="KW-0548">Nucleotidyltransferase</keyword>
<keyword id="KW-0539">Nucleus</keyword>
<keyword id="KW-1185">Reference proteome</keyword>
<keyword id="KW-0677">Repeat</keyword>
<keyword id="KW-0694">RNA-binding</keyword>
<keyword id="KW-0808">Transferase</keyword>
<dbReference type="EC" id="2.7.7.84"/>
<dbReference type="EMBL" id="AY250706">
    <property type="protein sequence ID" value="AAP76224.1"/>
    <property type="molecule type" value="mRNA"/>
</dbReference>
<dbReference type="RefSeq" id="NP_001009493.1">
    <property type="nucleotide sequence ID" value="NM_001009493.1"/>
</dbReference>
<dbReference type="SMR" id="Q5MYT7"/>
<dbReference type="FunCoup" id="Q5MYT7">
    <property type="interactions" value="305"/>
</dbReference>
<dbReference type="STRING" id="10116.ENSRNOP00000073069"/>
<dbReference type="PhosphoSitePlus" id="Q5MYT7"/>
<dbReference type="GeneID" id="494202"/>
<dbReference type="KEGG" id="rno:494202"/>
<dbReference type="AGR" id="RGD:1359319"/>
<dbReference type="CTD" id="4940"/>
<dbReference type="RGD" id="1359319">
    <property type="gene designation" value="Oas3"/>
</dbReference>
<dbReference type="eggNOG" id="ENOG502S649">
    <property type="taxonomic scope" value="Eukaryota"/>
</dbReference>
<dbReference type="InParanoid" id="Q5MYT7"/>
<dbReference type="OrthoDB" id="44535at9989"/>
<dbReference type="PhylomeDB" id="Q5MYT7"/>
<dbReference type="PRO" id="PR:Q5MYT7"/>
<dbReference type="Proteomes" id="UP000002494">
    <property type="component" value="Unplaced"/>
</dbReference>
<dbReference type="GO" id="GO:0005737">
    <property type="term" value="C:cytoplasm"/>
    <property type="evidence" value="ECO:0000250"/>
    <property type="project" value="UniProtKB"/>
</dbReference>
<dbReference type="GO" id="GO:0005829">
    <property type="term" value="C:cytosol"/>
    <property type="evidence" value="ECO:0000318"/>
    <property type="project" value="GO_Central"/>
</dbReference>
<dbReference type="GO" id="GO:0016020">
    <property type="term" value="C:membrane"/>
    <property type="evidence" value="ECO:0000318"/>
    <property type="project" value="GO_Central"/>
</dbReference>
<dbReference type="GO" id="GO:0005654">
    <property type="term" value="C:nucleoplasm"/>
    <property type="evidence" value="ECO:0000318"/>
    <property type="project" value="GO_Central"/>
</dbReference>
<dbReference type="GO" id="GO:0001730">
    <property type="term" value="F:2'-5'-oligoadenylate synthetase activity"/>
    <property type="evidence" value="ECO:0000250"/>
    <property type="project" value="UniProtKB"/>
</dbReference>
<dbReference type="GO" id="GO:0005524">
    <property type="term" value="F:ATP binding"/>
    <property type="evidence" value="ECO:0000250"/>
    <property type="project" value="UniProtKB"/>
</dbReference>
<dbReference type="GO" id="GO:0003725">
    <property type="term" value="F:double-stranded RNA binding"/>
    <property type="evidence" value="ECO:0000250"/>
    <property type="project" value="UniProtKB"/>
</dbReference>
<dbReference type="GO" id="GO:0046872">
    <property type="term" value="F:metal ion binding"/>
    <property type="evidence" value="ECO:0007669"/>
    <property type="project" value="UniProtKB-KW"/>
</dbReference>
<dbReference type="GO" id="GO:0140374">
    <property type="term" value="P:antiviral innate immune response"/>
    <property type="evidence" value="ECO:0000318"/>
    <property type="project" value="GO_Central"/>
</dbReference>
<dbReference type="GO" id="GO:0070106">
    <property type="term" value="P:interleukin-27-mediated signaling pathway"/>
    <property type="evidence" value="ECO:0000318"/>
    <property type="project" value="GO_Central"/>
</dbReference>
<dbReference type="GO" id="GO:0039530">
    <property type="term" value="P:MDA-5 signaling pathway"/>
    <property type="evidence" value="ECO:0000266"/>
    <property type="project" value="RGD"/>
</dbReference>
<dbReference type="GO" id="GO:0071650">
    <property type="term" value="P:negative regulation of chemokine (C-C motif) ligand 5 production"/>
    <property type="evidence" value="ECO:0000266"/>
    <property type="project" value="RGD"/>
</dbReference>
<dbReference type="GO" id="GO:2000342">
    <property type="term" value="P:negative regulation of chemokine (C-X-C motif) ligand 2 production"/>
    <property type="evidence" value="ECO:0000266"/>
    <property type="project" value="RGD"/>
</dbReference>
<dbReference type="GO" id="GO:0035395">
    <property type="term" value="P:negative regulation of chemokine (C-X-C motif) ligand 9 production"/>
    <property type="evidence" value="ECO:0000266"/>
    <property type="project" value="RGD"/>
</dbReference>
<dbReference type="GO" id="GO:0071659">
    <property type="term" value="P:negative regulation of IP-10 production"/>
    <property type="evidence" value="ECO:0000266"/>
    <property type="project" value="RGD"/>
</dbReference>
<dbReference type="GO" id="GO:0060339">
    <property type="term" value="P:negative regulation of type I interferon-mediated signaling pathway"/>
    <property type="evidence" value="ECO:0000266"/>
    <property type="project" value="RGD"/>
</dbReference>
<dbReference type="GO" id="GO:0045071">
    <property type="term" value="P:negative regulation of viral genome replication"/>
    <property type="evidence" value="ECO:0000266"/>
    <property type="project" value="RGD"/>
</dbReference>
<dbReference type="GO" id="GO:0032728">
    <property type="term" value="P:positive regulation of interferon-beta production"/>
    <property type="evidence" value="ECO:0000266"/>
    <property type="project" value="RGD"/>
</dbReference>
<dbReference type="GO" id="GO:0071639">
    <property type="term" value="P:positive regulation of monocyte chemotactic protein-1 production"/>
    <property type="evidence" value="ECO:0000266"/>
    <property type="project" value="RGD"/>
</dbReference>
<dbReference type="GO" id="GO:0032760">
    <property type="term" value="P:positive regulation of tumor necrosis factor production"/>
    <property type="evidence" value="ECO:0000266"/>
    <property type="project" value="RGD"/>
</dbReference>
<dbReference type="GO" id="GO:0009615">
    <property type="term" value="P:response to virus"/>
    <property type="evidence" value="ECO:0000250"/>
    <property type="project" value="UniProtKB"/>
</dbReference>
<dbReference type="GO" id="GO:0039529">
    <property type="term" value="P:RIG-I signaling pathway"/>
    <property type="evidence" value="ECO:0000266"/>
    <property type="project" value="RGD"/>
</dbReference>
<dbReference type="GO" id="GO:0060337">
    <property type="term" value="P:type I interferon-mediated signaling pathway"/>
    <property type="evidence" value="ECO:0000318"/>
    <property type="project" value="GO_Central"/>
</dbReference>
<dbReference type="CDD" id="cd05400">
    <property type="entry name" value="NT_2-5OAS_ClassI-CCAase"/>
    <property type="match status" value="3"/>
</dbReference>
<dbReference type="FunFam" id="3.30.460.10:FF:000147">
    <property type="entry name" value="2'-5'-oligoadenylate synthase 3"/>
    <property type="match status" value="1"/>
</dbReference>
<dbReference type="FunFam" id="1.10.1410.20:FF:000001">
    <property type="entry name" value="2'-5'-oligoadenylate synthetase 1"/>
    <property type="match status" value="1"/>
</dbReference>
<dbReference type="FunFam" id="3.30.460.10:FF:000007">
    <property type="entry name" value="2'-5'-oligoadenylate synthetase 1"/>
    <property type="match status" value="2"/>
</dbReference>
<dbReference type="FunFam" id="1.10.1410.20:FF:000002">
    <property type="entry name" value="2'-5'-oligoadenylate synthetase 3"/>
    <property type="match status" value="2"/>
</dbReference>
<dbReference type="Gene3D" id="1.10.1410.20">
    <property type="entry name" value="2'-5'-oligoadenylate synthetase 1, domain 2"/>
    <property type="match status" value="3"/>
</dbReference>
<dbReference type="Gene3D" id="3.30.460.10">
    <property type="entry name" value="Beta Polymerase, domain 2"/>
    <property type="match status" value="3"/>
</dbReference>
<dbReference type="InterPro" id="IPR018952">
    <property type="entry name" value="2-5-oligoAdlate_synth_1_dom2/C"/>
</dbReference>
<dbReference type="InterPro" id="IPR006117">
    <property type="entry name" value="2-5OAS_C_CS"/>
</dbReference>
<dbReference type="InterPro" id="IPR043518">
    <property type="entry name" value="2-5OAS_N_CS"/>
</dbReference>
<dbReference type="InterPro" id="IPR006116">
    <property type="entry name" value="NT_2-5OAS_ClassI-CCAase"/>
</dbReference>
<dbReference type="InterPro" id="IPR043519">
    <property type="entry name" value="NT_sf"/>
</dbReference>
<dbReference type="InterPro" id="IPR002934">
    <property type="entry name" value="Polymerase_NTP_transf_dom"/>
</dbReference>
<dbReference type="PANTHER" id="PTHR11258:SF7">
    <property type="entry name" value="2'-5'-OLIGOADENYLATE SYNTHASE-LIKE PROTEIN 2"/>
    <property type="match status" value="1"/>
</dbReference>
<dbReference type="PANTHER" id="PTHR11258">
    <property type="entry name" value="2-5 OLIGOADENYLATE SYNTHETASE"/>
    <property type="match status" value="1"/>
</dbReference>
<dbReference type="Pfam" id="PF01909">
    <property type="entry name" value="NTP_transf_2"/>
    <property type="match status" value="1"/>
</dbReference>
<dbReference type="Pfam" id="PF10421">
    <property type="entry name" value="OAS1_C"/>
    <property type="match status" value="3"/>
</dbReference>
<dbReference type="SUPFAM" id="SSF81301">
    <property type="entry name" value="Nucleotidyltransferase"/>
    <property type="match status" value="3"/>
</dbReference>
<dbReference type="SUPFAM" id="SSF81631">
    <property type="entry name" value="PAP/OAS1 substrate-binding domain"/>
    <property type="match status" value="3"/>
</dbReference>
<dbReference type="PROSITE" id="PS00832">
    <property type="entry name" value="25A_SYNTH_1"/>
    <property type="match status" value="1"/>
</dbReference>
<dbReference type="PROSITE" id="PS00833">
    <property type="entry name" value="25A_SYNTH_2"/>
    <property type="match status" value="2"/>
</dbReference>
<dbReference type="PROSITE" id="PS50152">
    <property type="entry name" value="25A_SYNTH_3"/>
    <property type="match status" value="3"/>
</dbReference>
<evidence type="ECO:0000250" key="1"/>
<evidence type="ECO:0000250" key="2">
    <source>
        <dbReference type="UniProtKB" id="P00973"/>
    </source>
</evidence>
<evidence type="ECO:0000250" key="3">
    <source>
        <dbReference type="UniProtKB" id="P29728"/>
    </source>
</evidence>
<evidence type="ECO:0000250" key="4">
    <source>
        <dbReference type="UniProtKB" id="Q9Y6K5"/>
    </source>
</evidence>
<evidence type="ECO:0000256" key="5">
    <source>
        <dbReference type="SAM" id="MobiDB-lite"/>
    </source>
</evidence>
<evidence type="ECO:0000305" key="6"/>
<name>OAS3_RAT</name>
<organism>
    <name type="scientific">Rattus norvegicus</name>
    <name type="common">Rat</name>
    <dbReference type="NCBI Taxonomy" id="10116"/>
    <lineage>
        <taxon>Eukaryota</taxon>
        <taxon>Metazoa</taxon>
        <taxon>Chordata</taxon>
        <taxon>Craniata</taxon>
        <taxon>Vertebrata</taxon>
        <taxon>Euteleostomi</taxon>
        <taxon>Mammalia</taxon>
        <taxon>Eutheria</taxon>
        <taxon>Euarchontoglires</taxon>
        <taxon>Glires</taxon>
        <taxon>Rodentia</taxon>
        <taxon>Myomorpha</taxon>
        <taxon>Muroidea</taxon>
        <taxon>Muridae</taxon>
        <taxon>Murinae</taxon>
        <taxon>Rattus</taxon>
    </lineage>
</organism>